<name>RSMH_BACP2</name>
<sequence>MFQHETVLLKETVDGLNVKEDGTYVDCTLGGAGHSSYLLSQLSEKGTLIGFDQDDAALDHAREKLAGSKANILFIKSNFRYLKERLNEQGITSVDGVIFDLGVSSPQLDTPERGFSYHHDAPLDMRMDQSAALSAKKVVNEWPFEDLVRIFYKYGEEKFSKQIARKIEEARKKAPIETTGELVDIIKEGIPAPARRTGGHPAKRVFQAIRIAVNDELKVFEEALEQAIELLNPKGRISVITFHSLEDRICKSTFREMSSLPELPHGLPVIPEGLEPKLKLITRKPIVASEQELEHNNRARSAKLRIAEKK</sequence>
<comment type="function">
    <text evidence="1">Specifically methylates the N4 position of cytidine in position 1402 (C1402) of 16S rRNA.</text>
</comment>
<comment type="catalytic activity">
    <reaction evidence="1">
        <text>cytidine(1402) in 16S rRNA + S-adenosyl-L-methionine = N(4)-methylcytidine(1402) in 16S rRNA + S-adenosyl-L-homocysteine + H(+)</text>
        <dbReference type="Rhea" id="RHEA:42928"/>
        <dbReference type="Rhea" id="RHEA-COMP:10286"/>
        <dbReference type="Rhea" id="RHEA-COMP:10287"/>
        <dbReference type="ChEBI" id="CHEBI:15378"/>
        <dbReference type="ChEBI" id="CHEBI:57856"/>
        <dbReference type="ChEBI" id="CHEBI:59789"/>
        <dbReference type="ChEBI" id="CHEBI:74506"/>
        <dbReference type="ChEBI" id="CHEBI:82748"/>
        <dbReference type="EC" id="2.1.1.199"/>
    </reaction>
</comment>
<comment type="subcellular location">
    <subcellularLocation>
        <location evidence="1">Cytoplasm</location>
    </subcellularLocation>
</comment>
<comment type="similarity">
    <text evidence="1">Belongs to the methyltransferase superfamily. RsmH family.</text>
</comment>
<feature type="chain" id="PRO_0000386735" description="Ribosomal RNA small subunit methyltransferase H">
    <location>
        <begin position="1"/>
        <end position="310"/>
    </location>
</feature>
<feature type="binding site" evidence="1">
    <location>
        <begin position="32"/>
        <end position="34"/>
    </location>
    <ligand>
        <name>S-adenosyl-L-methionine</name>
        <dbReference type="ChEBI" id="CHEBI:59789"/>
    </ligand>
</feature>
<feature type="binding site" evidence="1">
    <location>
        <position position="52"/>
    </location>
    <ligand>
        <name>S-adenosyl-L-methionine</name>
        <dbReference type="ChEBI" id="CHEBI:59789"/>
    </ligand>
</feature>
<feature type="binding site" evidence="1">
    <location>
        <position position="79"/>
    </location>
    <ligand>
        <name>S-adenosyl-L-methionine</name>
        <dbReference type="ChEBI" id="CHEBI:59789"/>
    </ligand>
</feature>
<feature type="binding site" evidence="1">
    <location>
        <position position="100"/>
    </location>
    <ligand>
        <name>S-adenosyl-L-methionine</name>
        <dbReference type="ChEBI" id="CHEBI:59789"/>
    </ligand>
</feature>
<feature type="binding site" evidence="1">
    <location>
        <position position="107"/>
    </location>
    <ligand>
        <name>S-adenosyl-L-methionine</name>
        <dbReference type="ChEBI" id="CHEBI:59789"/>
    </ligand>
</feature>
<dbReference type="EC" id="2.1.1.199" evidence="1"/>
<dbReference type="EMBL" id="CP000813">
    <property type="protein sequence ID" value="ABV62090.1"/>
    <property type="molecule type" value="Genomic_DNA"/>
</dbReference>
<dbReference type="RefSeq" id="WP_012009863.1">
    <property type="nucleotide sequence ID" value="NZ_VEIS01000003.1"/>
</dbReference>
<dbReference type="SMR" id="A8FCX3"/>
<dbReference type="STRING" id="315750.BPUM_1407"/>
<dbReference type="GeneID" id="5620670"/>
<dbReference type="KEGG" id="bpu:BPUM_1407"/>
<dbReference type="eggNOG" id="COG0275">
    <property type="taxonomic scope" value="Bacteria"/>
</dbReference>
<dbReference type="HOGENOM" id="CLU_038422_2_0_9"/>
<dbReference type="OrthoDB" id="9806637at2"/>
<dbReference type="Proteomes" id="UP000001355">
    <property type="component" value="Chromosome"/>
</dbReference>
<dbReference type="GO" id="GO:0005737">
    <property type="term" value="C:cytoplasm"/>
    <property type="evidence" value="ECO:0007669"/>
    <property type="project" value="UniProtKB-SubCell"/>
</dbReference>
<dbReference type="GO" id="GO:0071424">
    <property type="term" value="F:rRNA (cytosine-N4-)-methyltransferase activity"/>
    <property type="evidence" value="ECO:0007669"/>
    <property type="project" value="UniProtKB-UniRule"/>
</dbReference>
<dbReference type="GO" id="GO:0070475">
    <property type="term" value="P:rRNA base methylation"/>
    <property type="evidence" value="ECO:0007669"/>
    <property type="project" value="UniProtKB-UniRule"/>
</dbReference>
<dbReference type="FunFam" id="1.10.150.170:FF:000001">
    <property type="entry name" value="Ribosomal RNA small subunit methyltransferase H"/>
    <property type="match status" value="1"/>
</dbReference>
<dbReference type="Gene3D" id="1.10.150.170">
    <property type="entry name" value="Putative methyltransferase TM0872, insert domain"/>
    <property type="match status" value="1"/>
</dbReference>
<dbReference type="Gene3D" id="3.40.50.150">
    <property type="entry name" value="Vaccinia Virus protein VP39"/>
    <property type="match status" value="1"/>
</dbReference>
<dbReference type="HAMAP" id="MF_01007">
    <property type="entry name" value="16SrRNA_methyltr_H"/>
    <property type="match status" value="1"/>
</dbReference>
<dbReference type="InterPro" id="IPR002903">
    <property type="entry name" value="RsmH"/>
</dbReference>
<dbReference type="InterPro" id="IPR023397">
    <property type="entry name" value="SAM-dep_MeTrfase_MraW_recog"/>
</dbReference>
<dbReference type="InterPro" id="IPR029063">
    <property type="entry name" value="SAM-dependent_MTases_sf"/>
</dbReference>
<dbReference type="NCBIfam" id="TIGR00006">
    <property type="entry name" value="16S rRNA (cytosine(1402)-N(4))-methyltransferase RsmH"/>
    <property type="match status" value="1"/>
</dbReference>
<dbReference type="PANTHER" id="PTHR11265:SF0">
    <property type="entry name" value="12S RRNA N4-METHYLCYTIDINE METHYLTRANSFERASE"/>
    <property type="match status" value="1"/>
</dbReference>
<dbReference type="PANTHER" id="PTHR11265">
    <property type="entry name" value="S-ADENOSYL-METHYLTRANSFERASE MRAW"/>
    <property type="match status" value="1"/>
</dbReference>
<dbReference type="Pfam" id="PF01795">
    <property type="entry name" value="Methyltransf_5"/>
    <property type="match status" value="1"/>
</dbReference>
<dbReference type="PIRSF" id="PIRSF004486">
    <property type="entry name" value="MraW"/>
    <property type="match status" value="1"/>
</dbReference>
<dbReference type="SUPFAM" id="SSF81799">
    <property type="entry name" value="Putative methyltransferase TM0872, insert domain"/>
    <property type="match status" value="1"/>
</dbReference>
<dbReference type="SUPFAM" id="SSF53335">
    <property type="entry name" value="S-adenosyl-L-methionine-dependent methyltransferases"/>
    <property type="match status" value="1"/>
</dbReference>
<organism>
    <name type="scientific">Bacillus pumilus (strain SAFR-032)</name>
    <dbReference type="NCBI Taxonomy" id="315750"/>
    <lineage>
        <taxon>Bacteria</taxon>
        <taxon>Bacillati</taxon>
        <taxon>Bacillota</taxon>
        <taxon>Bacilli</taxon>
        <taxon>Bacillales</taxon>
        <taxon>Bacillaceae</taxon>
        <taxon>Bacillus</taxon>
    </lineage>
</organism>
<evidence type="ECO:0000255" key="1">
    <source>
        <dbReference type="HAMAP-Rule" id="MF_01007"/>
    </source>
</evidence>
<protein>
    <recommendedName>
        <fullName evidence="1">Ribosomal RNA small subunit methyltransferase H</fullName>
        <ecNumber evidence="1">2.1.1.199</ecNumber>
    </recommendedName>
    <alternativeName>
        <fullName evidence="1">16S rRNA m(4)C1402 methyltransferase</fullName>
    </alternativeName>
    <alternativeName>
        <fullName evidence="1">rRNA (cytosine-N(4)-)-methyltransferase RsmH</fullName>
    </alternativeName>
</protein>
<gene>
    <name evidence="1" type="primary">rsmH</name>
    <name type="synonym">mraW</name>
    <name type="ordered locus">BPUM_1407</name>
</gene>
<proteinExistence type="inferred from homology"/>
<reference key="1">
    <citation type="journal article" date="2007" name="PLoS ONE">
        <title>Paradoxical DNA repair and peroxide resistance gene conservation in Bacillus pumilus SAFR-032.</title>
        <authorList>
            <person name="Gioia J."/>
            <person name="Yerrapragada S."/>
            <person name="Qin X."/>
            <person name="Jiang H."/>
            <person name="Igboeli O.C."/>
            <person name="Muzny D."/>
            <person name="Dugan-Rocha S."/>
            <person name="Ding Y."/>
            <person name="Hawes A."/>
            <person name="Liu W."/>
            <person name="Perez L."/>
            <person name="Kovar C."/>
            <person name="Dinh H."/>
            <person name="Lee S."/>
            <person name="Nazareth L."/>
            <person name="Blyth P."/>
            <person name="Holder M."/>
            <person name="Buhay C."/>
            <person name="Tirumalai M.R."/>
            <person name="Liu Y."/>
            <person name="Dasgupta I."/>
            <person name="Bokhetache L."/>
            <person name="Fujita M."/>
            <person name="Karouia F."/>
            <person name="Eswara Moorthy P."/>
            <person name="Siefert J."/>
            <person name="Uzman A."/>
            <person name="Buzumbo P."/>
            <person name="Verma A."/>
            <person name="Zwiya H."/>
            <person name="McWilliams B.D."/>
            <person name="Olowu A."/>
            <person name="Clinkenbeard K.D."/>
            <person name="Newcombe D."/>
            <person name="Golebiewski L."/>
            <person name="Petrosino J.F."/>
            <person name="Nicholson W.L."/>
            <person name="Fox G.E."/>
            <person name="Venkateswaran K."/>
            <person name="Highlander S.K."/>
            <person name="Weinstock G.M."/>
        </authorList>
    </citation>
    <scope>NUCLEOTIDE SEQUENCE [LARGE SCALE GENOMIC DNA]</scope>
    <source>
        <strain>SAFR-032</strain>
    </source>
</reference>
<accession>A8FCX3</accession>
<keyword id="KW-0963">Cytoplasm</keyword>
<keyword id="KW-0489">Methyltransferase</keyword>
<keyword id="KW-0698">rRNA processing</keyword>
<keyword id="KW-0949">S-adenosyl-L-methionine</keyword>
<keyword id="KW-0808">Transferase</keyword>